<proteinExistence type="evidence at protein level"/>
<reference key="1">
    <citation type="journal article" date="1999" name="J. Biol. Chem.">
        <title>Spi-C, a novel Ets protein that is temporally regulated during B lymphocyte development.</title>
        <authorList>
            <person name="Bemark M."/>
            <person name="Martensson A."/>
            <person name="Liberg D."/>
            <person name="Leanderson T."/>
        </authorList>
    </citation>
    <scope>NUCLEOTIDE SEQUENCE [MRNA] (ISOFORM 1)</scope>
    <scope>DNA-BINDING</scope>
    <scope>TISSUE SPECIFICITY</scope>
</reference>
<reference key="2">
    <citation type="journal article" date="2005" name="Science">
        <title>The transcriptional landscape of the mammalian genome.</title>
        <authorList>
            <person name="Carninci P."/>
            <person name="Kasukawa T."/>
            <person name="Katayama S."/>
            <person name="Gough J."/>
            <person name="Frith M.C."/>
            <person name="Maeda N."/>
            <person name="Oyama R."/>
            <person name="Ravasi T."/>
            <person name="Lenhard B."/>
            <person name="Wells C."/>
            <person name="Kodzius R."/>
            <person name="Shimokawa K."/>
            <person name="Bajic V.B."/>
            <person name="Brenner S.E."/>
            <person name="Batalov S."/>
            <person name="Forrest A.R."/>
            <person name="Zavolan M."/>
            <person name="Davis M.J."/>
            <person name="Wilming L.G."/>
            <person name="Aidinis V."/>
            <person name="Allen J.E."/>
            <person name="Ambesi-Impiombato A."/>
            <person name="Apweiler R."/>
            <person name="Aturaliya R.N."/>
            <person name="Bailey T.L."/>
            <person name="Bansal M."/>
            <person name="Baxter L."/>
            <person name="Beisel K.W."/>
            <person name="Bersano T."/>
            <person name="Bono H."/>
            <person name="Chalk A.M."/>
            <person name="Chiu K.P."/>
            <person name="Choudhary V."/>
            <person name="Christoffels A."/>
            <person name="Clutterbuck D.R."/>
            <person name="Crowe M.L."/>
            <person name="Dalla E."/>
            <person name="Dalrymple B.P."/>
            <person name="de Bono B."/>
            <person name="Della Gatta G."/>
            <person name="di Bernardo D."/>
            <person name="Down T."/>
            <person name="Engstrom P."/>
            <person name="Fagiolini M."/>
            <person name="Faulkner G."/>
            <person name="Fletcher C.F."/>
            <person name="Fukushima T."/>
            <person name="Furuno M."/>
            <person name="Futaki S."/>
            <person name="Gariboldi M."/>
            <person name="Georgii-Hemming P."/>
            <person name="Gingeras T.R."/>
            <person name="Gojobori T."/>
            <person name="Green R.E."/>
            <person name="Gustincich S."/>
            <person name="Harbers M."/>
            <person name="Hayashi Y."/>
            <person name="Hensch T.K."/>
            <person name="Hirokawa N."/>
            <person name="Hill D."/>
            <person name="Huminiecki L."/>
            <person name="Iacono M."/>
            <person name="Ikeo K."/>
            <person name="Iwama A."/>
            <person name="Ishikawa T."/>
            <person name="Jakt M."/>
            <person name="Kanapin A."/>
            <person name="Katoh M."/>
            <person name="Kawasawa Y."/>
            <person name="Kelso J."/>
            <person name="Kitamura H."/>
            <person name="Kitano H."/>
            <person name="Kollias G."/>
            <person name="Krishnan S.P."/>
            <person name="Kruger A."/>
            <person name="Kummerfeld S.K."/>
            <person name="Kurochkin I.V."/>
            <person name="Lareau L.F."/>
            <person name="Lazarevic D."/>
            <person name="Lipovich L."/>
            <person name="Liu J."/>
            <person name="Liuni S."/>
            <person name="McWilliam S."/>
            <person name="Madan Babu M."/>
            <person name="Madera M."/>
            <person name="Marchionni L."/>
            <person name="Matsuda H."/>
            <person name="Matsuzawa S."/>
            <person name="Miki H."/>
            <person name="Mignone F."/>
            <person name="Miyake S."/>
            <person name="Morris K."/>
            <person name="Mottagui-Tabar S."/>
            <person name="Mulder N."/>
            <person name="Nakano N."/>
            <person name="Nakauchi H."/>
            <person name="Ng P."/>
            <person name="Nilsson R."/>
            <person name="Nishiguchi S."/>
            <person name="Nishikawa S."/>
            <person name="Nori F."/>
            <person name="Ohara O."/>
            <person name="Okazaki Y."/>
            <person name="Orlando V."/>
            <person name="Pang K.C."/>
            <person name="Pavan W.J."/>
            <person name="Pavesi G."/>
            <person name="Pesole G."/>
            <person name="Petrovsky N."/>
            <person name="Piazza S."/>
            <person name="Reed J."/>
            <person name="Reid J.F."/>
            <person name="Ring B.Z."/>
            <person name="Ringwald M."/>
            <person name="Rost B."/>
            <person name="Ruan Y."/>
            <person name="Salzberg S.L."/>
            <person name="Sandelin A."/>
            <person name="Schneider C."/>
            <person name="Schoenbach C."/>
            <person name="Sekiguchi K."/>
            <person name="Semple C.A."/>
            <person name="Seno S."/>
            <person name="Sessa L."/>
            <person name="Sheng Y."/>
            <person name="Shibata Y."/>
            <person name="Shimada H."/>
            <person name="Shimada K."/>
            <person name="Silva D."/>
            <person name="Sinclair B."/>
            <person name="Sperling S."/>
            <person name="Stupka E."/>
            <person name="Sugiura K."/>
            <person name="Sultana R."/>
            <person name="Takenaka Y."/>
            <person name="Taki K."/>
            <person name="Tammoja K."/>
            <person name="Tan S.L."/>
            <person name="Tang S."/>
            <person name="Taylor M.S."/>
            <person name="Tegner J."/>
            <person name="Teichmann S.A."/>
            <person name="Ueda H.R."/>
            <person name="van Nimwegen E."/>
            <person name="Verardo R."/>
            <person name="Wei C.L."/>
            <person name="Yagi K."/>
            <person name="Yamanishi H."/>
            <person name="Zabarovsky E."/>
            <person name="Zhu S."/>
            <person name="Zimmer A."/>
            <person name="Hide W."/>
            <person name="Bult C."/>
            <person name="Grimmond S.M."/>
            <person name="Teasdale R.D."/>
            <person name="Liu E.T."/>
            <person name="Brusic V."/>
            <person name="Quackenbush J."/>
            <person name="Wahlestedt C."/>
            <person name="Mattick J.S."/>
            <person name="Hume D.A."/>
            <person name="Kai C."/>
            <person name="Sasaki D."/>
            <person name="Tomaru Y."/>
            <person name="Fukuda S."/>
            <person name="Kanamori-Katayama M."/>
            <person name="Suzuki M."/>
            <person name="Aoki J."/>
            <person name="Arakawa T."/>
            <person name="Iida J."/>
            <person name="Imamura K."/>
            <person name="Itoh M."/>
            <person name="Kato T."/>
            <person name="Kawaji H."/>
            <person name="Kawagashira N."/>
            <person name="Kawashima T."/>
            <person name="Kojima M."/>
            <person name="Kondo S."/>
            <person name="Konno H."/>
            <person name="Nakano K."/>
            <person name="Ninomiya N."/>
            <person name="Nishio T."/>
            <person name="Okada M."/>
            <person name="Plessy C."/>
            <person name="Shibata K."/>
            <person name="Shiraki T."/>
            <person name="Suzuki S."/>
            <person name="Tagami M."/>
            <person name="Waki K."/>
            <person name="Watahiki A."/>
            <person name="Okamura-Oho Y."/>
            <person name="Suzuki H."/>
            <person name="Kawai J."/>
            <person name="Hayashizaki Y."/>
        </authorList>
    </citation>
    <scope>NUCLEOTIDE SEQUENCE [LARGE SCALE MRNA] (ISOFORMS 1 AND 2)</scope>
    <source>
        <strain>C57BL/6J</strain>
        <strain>NOD</strain>
        <tissue>Bone</tissue>
        <tissue>Spleen</tissue>
    </source>
</reference>
<reference key="3">
    <citation type="submission" date="2005-07" db="EMBL/GenBank/DDBJ databases">
        <authorList>
            <person name="Mural R.J."/>
            <person name="Adams M.D."/>
            <person name="Myers E.W."/>
            <person name="Smith H.O."/>
            <person name="Venter J.C."/>
        </authorList>
    </citation>
    <scope>NUCLEOTIDE SEQUENCE [LARGE SCALE GENOMIC DNA]</scope>
</reference>
<reference key="4">
    <citation type="journal article" date="2004" name="Genome Res.">
        <title>The status, quality, and expansion of the NIH full-length cDNA project: the Mammalian Gene Collection (MGC).</title>
        <authorList>
            <consortium name="The MGC Project Team"/>
        </authorList>
    </citation>
    <scope>NUCLEOTIDE SEQUENCE [LARGE SCALE MRNA] (ISOFORM 1)</scope>
    <source>
        <strain>C57BL/6J</strain>
        <tissue>Thymus</tissue>
    </source>
</reference>
<reference key="5">
    <citation type="journal article" date="1999" name="Int. Immunol.">
        <title>Prf, a novel Ets family protein that binds to the PU.1 binding motif, is specifically expressed in restricted stages of B cell development.</title>
        <authorList>
            <person name="Hashimoto S."/>
            <person name="Nishizumi H."/>
            <person name="Hayashi R."/>
            <person name="Tsuboi A."/>
            <person name="Nagawa F."/>
            <person name="Takemori T."/>
            <person name="Sakano H."/>
        </authorList>
    </citation>
    <scope>DNA-BINDING</scope>
    <scope>TISSUE SPECIFICITY</scope>
</reference>
<reference key="6">
    <citation type="journal article" date="2009" name="Nature">
        <title>Role for Spi-C in the development of red pulp macrophages and splenic iron homeostasis.</title>
        <authorList>
            <person name="Kohyama M."/>
            <person name="Ise W."/>
            <person name="Edelson B.T."/>
            <person name="Wilker P.R."/>
            <person name="Hildner K."/>
            <person name="Mejia C."/>
            <person name="Frazier W.A."/>
            <person name="Murphy T.L."/>
            <person name="Murphy K.M."/>
        </authorList>
    </citation>
    <scope>DISRUPTION PHENOTYPE</scope>
    <scope>FUNCTION</scope>
    <scope>TISSUE SPECIFICITY</scope>
</reference>
<name>SPIC_MOUSE</name>
<accession>Q6P3D7</accession>
<accession>Q3U064</accession>
<accession>Q3U0G6</accession>
<accession>Q3U1E9</accession>
<accession>Q9Z0Y0</accession>
<dbReference type="EMBL" id="AF098863">
    <property type="protein sequence ID" value="AAD16228.2"/>
    <property type="molecule type" value="mRNA"/>
</dbReference>
<dbReference type="EMBL" id="AK137522">
    <property type="protein sequence ID" value="BAE23394.1"/>
    <property type="molecule type" value="mRNA"/>
</dbReference>
<dbReference type="EMBL" id="AK156024">
    <property type="protein sequence ID" value="BAE33549.1"/>
    <property type="molecule type" value="mRNA"/>
</dbReference>
<dbReference type="EMBL" id="AK156892">
    <property type="protein sequence ID" value="BAE33887.1"/>
    <property type="molecule type" value="mRNA"/>
</dbReference>
<dbReference type="EMBL" id="AK157188">
    <property type="protein sequence ID" value="BAE33991.1"/>
    <property type="molecule type" value="mRNA"/>
</dbReference>
<dbReference type="EMBL" id="CH466539">
    <property type="protein sequence ID" value="EDL21490.1"/>
    <property type="molecule type" value="Genomic_DNA"/>
</dbReference>
<dbReference type="EMBL" id="BC064038">
    <property type="protein sequence ID" value="AAH64038.1"/>
    <property type="molecule type" value="mRNA"/>
</dbReference>
<dbReference type="CCDS" id="CCDS36023.1">
    <molecule id="Q6P3D7-1"/>
</dbReference>
<dbReference type="RefSeq" id="NP_035591.3">
    <molecule id="Q6P3D7-1"/>
    <property type="nucleotide sequence ID" value="NM_011461.3"/>
</dbReference>
<dbReference type="SMR" id="Q6P3D7"/>
<dbReference type="BioGRID" id="203450">
    <property type="interactions" value="1"/>
</dbReference>
<dbReference type="FunCoup" id="Q6P3D7">
    <property type="interactions" value="1061"/>
</dbReference>
<dbReference type="STRING" id="10090.ENSMUSP00000004473"/>
<dbReference type="GlyGen" id="Q6P3D7">
    <property type="glycosylation" value="1 site, 1 O-linked glycan (1 site)"/>
</dbReference>
<dbReference type="iPTMnet" id="Q6P3D7"/>
<dbReference type="PhosphoSitePlus" id="Q6P3D7"/>
<dbReference type="PaxDb" id="10090-ENSMUSP00000004473"/>
<dbReference type="ProteomicsDB" id="257351">
    <molecule id="Q6P3D7-1"/>
</dbReference>
<dbReference type="ProteomicsDB" id="257352">
    <molecule id="Q6P3D7-2"/>
</dbReference>
<dbReference type="Antibodypedia" id="30388">
    <property type="antibodies" value="144 antibodies from 24 providers"/>
</dbReference>
<dbReference type="DNASU" id="20728"/>
<dbReference type="Ensembl" id="ENSMUST00000004473.15">
    <molecule id="Q6P3D7-1"/>
    <property type="protein sequence ID" value="ENSMUSP00000004473.9"/>
    <property type="gene ID" value="ENSMUSG00000004359.17"/>
</dbReference>
<dbReference type="GeneID" id="20728"/>
<dbReference type="KEGG" id="mmu:20728"/>
<dbReference type="UCSC" id="uc007grv.2">
    <molecule id="Q6P3D7-1"/>
    <property type="organism name" value="mouse"/>
</dbReference>
<dbReference type="AGR" id="MGI:1341168"/>
<dbReference type="CTD" id="121599"/>
<dbReference type="MGI" id="MGI:1341168">
    <property type="gene designation" value="Spic"/>
</dbReference>
<dbReference type="VEuPathDB" id="HostDB:ENSMUSG00000004359"/>
<dbReference type="eggNOG" id="KOG3805">
    <property type="taxonomic scope" value="Eukaryota"/>
</dbReference>
<dbReference type="GeneTree" id="ENSGT00940000155067"/>
<dbReference type="HOGENOM" id="CLU_098156_0_0_1"/>
<dbReference type="InParanoid" id="Q6P3D7"/>
<dbReference type="OMA" id="YSWRNVI"/>
<dbReference type="OrthoDB" id="10043646at2759"/>
<dbReference type="PhylomeDB" id="Q6P3D7"/>
<dbReference type="TreeFam" id="TF318679"/>
<dbReference type="BioGRID-ORCS" id="20728">
    <property type="hits" value="2 hits in 76 CRISPR screens"/>
</dbReference>
<dbReference type="PRO" id="PR:Q6P3D7"/>
<dbReference type="Proteomes" id="UP000000589">
    <property type="component" value="Chromosome 10"/>
</dbReference>
<dbReference type="RNAct" id="Q6P3D7">
    <property type="molecule type" value="protein"/>
</dbReference>
<dbReference type="Bgee" id="ENSMUSG00000004359">
    <property type="expression patterns" value="Expressed in morula and 84 other cell types or tissues"/>
</dbReference>
<dbReference type="ExpressionAtlas" id="Q6P3D7">
    <property type="expression patterns" value="baseline and differential"/>
</dbReference>
<dbReference type="GO" id="GO:0005634">
    <property type="term" value="C:nucleus"/>
    <property type="evidence" value="ECO:0007669"/>
    <property type="project" value="UniProtKB-SubCell"/>
</dbReference>
<dbReference type="GO" id="GO:0001228">
    <property type="term" value="F:DNA-binding transcription activator activity, RNA polymerase II-specific"/>
    <property type="evidence" value="ECO:0000315"/>
    <property type="project" value="NTNU_SB"/>
</dbReference>
<dbReference type="GO" id="GO:0000978">
    <property type="term" value="F:RNA polymerase II cis-regulatory region sequence-specific DNA binding"/>
    <property type="evidence" value="ECO:0000315"/>
    <property type="project" value="NTNU_SB"/>
</dbReference>
<dbReference type="GO" id="GO:0001824">
    <property type="term" value="P:blastocyst development"/>
    <property type="evidence" value="ECO:0000315"/>
    <property type="project" value="MGI"/>
</dbReference>
<dbReference type="GO" id="GO:0045944">
    <property type="term" value="P:positive regulation of transcription by RNA polymerase II"/>
    <property type="evidence" value="ECO:0000315"/>
    <property type="project" value="NTNU_SB"/>
</dbReference>
<dbReference type="FunFam" id="1.10.10.10:FF:000335">
    <property type="entry name" value="Spi-C transcription factor"/>
    <property type="match status" value="1"/>
</dbReference>
<dbReference type="Gene3D" id="1.10.10.10">
    <property type="entry name" value="Winged helix-like DNA-binding domain superfamily/Winged helix DNA-binding domain"/>
    <property type="match status" value="1"/>
</dbReference>
<dbReference type="InterPro" id="IPR000418">
    <property type="entry name" value="Ets_dom"/>
</dbReference>
<dbReference type="InterPro" id="IPR046328">
    <property type="entry name" value="ETS_fam"/>
</dbReference>
<dbReference type="InterPro" id="IPR036388">
    <property type="entry name" value="WH-like_DNA-bd_sf"/>
</dbReference>
<dbReference type="InterPro" id="IPR036390">
    <property type="entry name" value="WH_DNA-bd_sf"/>
</dbReference>
<dbReference type="PANTHER" id="PTHR11849">
    <property type="entry name" value="ETS"/>
    <property type="match status" value="1"/>
</dbReference>
<dbReference type="PANTHER" id="PTHR11849:SF17">
    <property type="entry name" value="TRANSCRIPTION FACTOR SPI-C"/>
    <property type="match status" value="1"/>
</dbReference>
<dbReference type="Pfam" id="PF00178">
    <property type="entry name" value="Ets"/>
    <property type="match status" value="1"/>
</dbReference>
<dbReference type="PRINTS" id="PR00454">
    <property type="entry name" value="ETSDOMAIN"/>
</dbReference>
<dbReference type="SMART" id="SM00413">
    <property type="entry name" value="ETS"/>
    <property type="match status" value="1"/>
</dbReference>
<dbReference type="SUPFAM" id="SSF46785">
    <property type="entry name" value="Winged helix' DNA-binding domain"/>
    <property type="match status" value="1"/>
</dbReference>
<dbReference type="PROSITE" id="PS00346">
    <property type="entry name" value="ETS_DOMAIN_2"/>
    <property type="match status" value="1"/>
</dbReference>
<dbReference type="PROSITE" id="PS50061">
    <property type="entry name" value="ETS_DOMAIN_3"/>
    <property type="match status" value="1"/>
</dbReference>
<evidence type="ECO:0000250" key="1"/>
<evidence type="ECO:0000255" key="2">
    <source>
        <dbReference type="PROSITE-ProRule" id="PRU00237"/>
    </source>
</evidence>
<evidence type="ECO:0000269" key="3">
    <source>
    </source>
</evidence>
<evidence type="ECO:0000269" key="4">
    <source>
    </source>
</evidence>
<evidence type="ECO:0000269" key="5">
    <source>
    </source>
</evidence>
<evidence type="ECO:0000303" key="6">
    <source>
    </source>
</evidence>
<evidence type="ECO:0000305" key="7"/>
<feature type="chain" id="PRO_0000204141" description="Transcription factor Spi-C">
    <location>
        <begin position="1"/>
        <end position="242"/>
    </location>
</feature>
<feature type="DNA-binding region" description="ETS" evidence="2">
    <location>
        <begin position="112"/>
        <end position="195"/>
    </location>
</feature>
<feature type="splice variant" id="VSP_037734" description="In isoform 2." evidence="6">
    <location>
        <begin position="1"/>
        <end position="101"/>
    </location>
</feature>
<feature type="splice variant" id="VSP_037735" description="In isoform 2." evidence="6">
    <original>QQKGGR</original>
    <variation>MLLMNN</variation>
    <location>
        <begin position="102"/>
        <end position="107"/>
    </location>
</feature>
<feature type="sequence conflict" description="In Ref. 1; AAD16228." evidence="7" ref="1">
    <original>E</original>
    <variation>G</variation>
    <location>
        <position position="80"/>
    </location>
</feature>
<feature type="sequence conflict" description="In Ref. 2; BAE33549." evidence="7" ref="2">
    <original>V</original>
    <variation>A</variation>
    <location>
        <position position="96"/>
    </location>
</feature>
<keyword id="KW-0025">Alternative splicing</keyword>
<keyword id="KW-0238">DNA-binding</keyword>
<keyword id="KW-0539">Nucleus</keyword>
<keyword id="KW-1185">Reference proteome</keyword>
<keyword id="KW-0804">Transcription</keyword>
<keyword id="KW-0805">Transcription regulation</keyword>
<gene>
    <name type="primary">Spic</name>
</gene>
<comment type="function">
    <text evidence="5">Controls the development of red pulp macrophages required for red blood cells recycling and iron homeostasis. Transcription factor that binds to the PU-box, a purine-rich DNA sequence (5'-GAGGA[AT]-3') that can act as a lymphoid-specific enhancer. Regulates VCAM1 gene expression.</text>
</comment>
<comment type="subunit">
    <text evidence="1">Binds DNA as a monomer.</text>
</comment>
<comment type="subcellular location">
    <subcellularLocation>
        <location evidence="7">Nucleus</location>
    </subcellularLocation>
</comment>
<comment type="alternative products">
    <event type="alternative splicing"/>
    <isoform>
        <id>Q6P3D7-1</id>
        <name>1</name>
        <sequence type="displayed"/>
    </isoform>
    <isoform>
        <id>Q6P3D7-2</id>
        <name>2</name>
        <sequence type="described" ref="VSP_037734 VSP_037735"/>
    </isoform>
</comment>
<comment type="tissue specificity">
    <text evidence="3 4 5">Expressed in lymphoid tissues, including spleen, bone marrow and thymus. According to PubMed:19037245, highly expressed in red pulp macrophages and, at lower, levels in B-cells, but not in other cells, including, monocytes, dendritic cells and other tissue macrophages. According to PubMed:10464163 expressed in pre- and mature B-cells but not in immature B-cells; according to PubMed:10187812 not expressed in pre- but predominantly in mature B-cells and at lower levels in macrophages.</text>
</comment>
<comment type="disruption phenotype">
    <text evidence="5">Cell-autonomous defect in the development of red pulp macrophages, but normal monocyte and other macrophage subsets. Mice show normal trapping of red blood cells in the spleen, but fail to phagocytose these cells efficiently and develop an iron overload localized selectively to splenic red pulp.</text>
</comment>
<comment type="similarity">
    <text evidence="7">Belongs to the ETS family.</text>
</comment>
<sequence>MTCCIDQDSLGQTFQDAIDILIQQSAGESQYSSENRNYMAIINPYPHVRGNANYYGMSPTENPLYDWRGVTNGSADLYLEGGFHQSVQNIAESQLVQPPFFQQKGGRGRRKLRLFEYLFESLCNSEMVSCIQWVDKARGIFQFISKNKETLAELWGQRKGNRKPMTYQKMARALRNYARTGEIIKIRRKLTYQFSEAVLQRLAPANYLGKDLFYPQYGQPDQGYLSLNHWNANHYAHGSYQS</sequence>
<protein>
    <recommendedName>
        <fullName>Transcription factor Spi-C</fullName>
    </recommendedName>
    <alternativeName>
        <fullName>Pu.1-related factor</fullName>
        <shortName>Prf</shortName>
    </alternativeName>
</protein>
<organism>
    <name type="scientific">Mus musculus</name>
    <name type="common">Mouse</name>
    <dbReference type="NCBI Taxonomy" id="10090"/>
    <lineage>
        <taxon>Eukaryota</taxon>
        <taxon>Metazoa</taxon>
        <taxon>Chordata</taxon>
        <taxon>Craniata</taxon>
        <taxon>Vertebrata</taxon>
        <taxon>Euteleostomi</taxon>
        <taxon>Mammalia</taxon>
        <taxon>Eutheria</taxon>
        <taxon>Euarchontoglires</taxon>
        <taxon>Glires</taxon>
        <taxon>Rodentia</taxon>
        <taxon>Myomorpha</taxon>
        <taxon>Muroidea</taxon>
        <taxon>Muridae</taxon>
        <taxon>Murinae</taxon>
        <taxon>Mus</taxon>
        <taxon>Mus</taxon>
    </lineage>
</organism>